<reference key="1">
    <citation type="journal article" date="2005" name="Proc. Natl. Acad. Sci. U.S.A.">
        <title>The genome of the heartwater agent Ehrlichia ruminantium contains multiple tandem repeats of actively variable copy number.</title>
        <authorList>
            <person name="Collins N.E."/>
            <person name="Liebenberg J."/>
            <person name="de Villiers E.P."/>
            <person name="Brayton K.A."/>
            <person name="Louw E."/>
            <person name="Pretorius A."/>
            <person name="Faber F.E."/>
            <person name="van Heerden H."/>
            <person name="Josemans A."/>
            <person name="van Kleef M."/>
            <person name="Steyn H.C."/>
            <person name="van Strijp M.F."/>
            <person name="Zweygarth E."/>
            <person name="Jongejan F."/>
            <person name="Maillard J.C."/>
            <person name="Berthier D."/>
            <person name="Botha M."/>
            <person name="Joubert F."/>
            <person name="Corton C.H."/>
            <person name="Thomson N.R."/>
            <person name="Allsopp M.T."/>
            <person name="Allsopp B.A."/>
        </authorList>
    </citation>
    <scope>NUCLEOTIDE SEQUENCE [LARGE SCALE GENOMIC DNA]</scope>
    <source>
        <strain>Welgevonden</strain>
    </source>
</reference>
<reference key="2">
    <citation type="journal article" date="2006" name="J. Bacteriol.">
        <title>Comparative genomic analysis of three strains of Ehrlichia ruminantium reveals an active process of genome size plasticity.</title>
        <authorList>
            <person name="Frutos R."/>
            <person name="Viari A."/>
            <person name="Ferraz C."/>
            <person name="Morgat A."/>
            <person name="Eychenie S."/>
            <person name="Kandassamy Y."/>
            <person name="Chantal I."/>
            <person name="Bensaid A."/>
            <person name="Coissac E."/>
            <person name="Vachiery N."/>
            <person name="Demaille J."/>
            <person name="Martinez D."/>
        </authorList>
    </citation>
    <scope>NUCLEOTIDE SEQUENCE [LARGE SCALE GENOMIC DNA]</scope>
    <source>
        <strain>Welgevonden</strain>
    </source>
</reference>
<comment type="function">
    <text evidence="1">This protein binds to 23S rRNA in the presence of protein L20.</text>
</comment>
<comment type="subunit">
    <text evidence="1">Part of the 50S ribosomal subunit. Contacts protein L20.</text>
</comment>
<comment type="similarity">
    <text evidence="1">Belongs to the bacterial ribosomal protein bL21 family.</text>
</comment>
<feature type="chain" id="PRO_0000270665" description="Large ribosomal subunit protein bL21">
    <location>
        <begin position="1"/>
        <end position="102"/>
    </location>
</feature>
<evidence type="ECO:0000255" key="1">
    <source>
        <dbReference type="HAMAP-Rule" id="MF_01363"/>
    </source>
</evidence>
<evidence type="ECO:0000305" key="2"/>
<name>RL21_EHRRW</name>
<dbReference type="EMBL" id="CR767821">
    <property type="protein sequence ID" value="CAH58211.1"/>
    <property type="molecule type" value="Genomic_DNA"/>
</dbReference>
<dbReference type="EMBL" id="CR925678">
    <property type="protein sequence ID" value="CAI26999.1"/>
    <property type="molecule type" value="Genomic_DNA"/>
</dbReference>
<dbReference type="RefSeq" id="WP_011155164.1">
    <property type="nucleotide sequence ID" value="NC_005295.2"/>
</dbReference>
<dbReference type="SMR" id="Q5HB47"/>
<dbReference type="GeneID" id="33058249"/>
<dbReference type="KEGG" id="eru:Erum4830"/>
<dbReference type="KEGG" id="erw:ERWE_CDS_05050"/>
<dbReference type="eggNOG" id="COG0261">
    <property type="taxonomic scope" value="Bacteria"/>
</dbReference>
<dbReference type="HOGENOM" id="CLU_061463_3_2_5"/>
<dbReference type="Proteomes" id="UP000001021">
    <property type="component" value="Chromosome"/>
</dbReference>
<dbReference type="GO" id="GO:0005737">
    <property type="term" value="C:cytoplasm"/>
    <property type="evidence" value="ECO:0007669"/>
    <property type="project" value="UniProtKB-ARBA"/>
</dbReference>
<dbReference type="GO" id="GO:1990904">
    <property type="term" value="C:ribonucleoprotein complex"/>
    <property type="evidence" value="ECO:0007669"/>
    <property type="project" value="UniProtKB-KW"/>
</dbReference>
<dbReference type="GO" id="GO:0005840">
    <property type="term" value="C:ribosome"/>
    <property type="evidence" value="ECO:0007669"/>
    <property type="project" value="UniProtKB-KW"/>
</dbReference>
<dbReference type="GO" id="GO:0019843">
    <property type="term" value="F:rRNA binding"/>
    <property type="evidence" value="ECO:0007669"/>
    <property type="project" value="UniProtKB-UniRule"/>
</dbReference>
<dbReference type="GO" id="GO:0003735">
    <property type="term" value="F:structural constituent of ribosome"/>
    <property type="evidence" value="ECO:0007669"/>
    <property type="project" value="InterPro"/>
</dbReference>
<dbReference type="GO" id="GO:0006412">
    <property type="term" value="P:translation"/>
    <property type="evidence" value="ECO:0007669"/>
    <property type="project" value="UniProtKB-UniRule"/>
</dbReference>
<dbReference type="HAMAP" id="MF_01363">
    <property type="entry name" value="Ribosomal_bL21"/>
    <property type="match status" value="1"/>
</dbReference>
<dbReference type="InterPro" id="IPR028909">
    <property type="entry name" value="bL21-like"/>
</dbReference>
<dbReference type="InterPro" id="IPR036164">
    <property type="entry name" value="bL21-like_sf"/>
</dbReference>
<dbReference type="InterPro" id="IPR001787">
    <property type="entry name" value="Ribosomal_bL21"/>
</dbReference>
<dbReference type="InterPro" id="IPR018258">
    <property type="entry name" value="Ribosomal_bL21_CS"/>
</dbReference>
<dbReference type="NCBIfam" id="TIGR00061">
    <property type="entry name" value="L21"/>
    <property type="match status" value="1"/>
</dbReference>
<dbReference type="PANTHER" id="PTHR21349">
    <property type="entry name" value="50S RIBOSOMAL PROTEIN L21"/>
    <property type="match status" value="1"/>
</dbReference>
<dbReference type="PANTHER" id="PTHR21349:SF0">
    <property type="entry name" value="LARGE RIBOSOMAL SUBUNIT PROTEIN BL21M"/>
    <property type="match status" value="1"/>
</dbReference>
<dbReference type="Pfam" id="PF00829">
    <property type="entry name" value="Ribosomal_L21p"/>
    <property type="match status" value="1"/>
</dbReference>
<dbReference type="SUPFAM" id="SSF141091">
    <property type="entry name" value="L21p-like"/>
    <property type="match status" value="1"/>
</dbReference>
<dbReference type="PROSITE" id="PS01169">
    <property type="entry name" value="RIBOSOMAL_L21"/>
    <property type="match status" value="1"/>
</dbReference>
<keyword id="KW-0687">Ribonucleoprotein</keyword>
<keyword id="KW-0689">Ribosomal protein</keyword>
<keyword id="KW-0694">RNA-binding</keyword>
<keyword id="KW-0699">rRNA-binding</keyword>
<accession>Q5HB47</accession>
<accession>Q5FEI7</accession>
<protein>
    <recommendedName>
        <fullName evidence="1">Large ribosomal subunit protein bL21</fullName>
    </recommendedName>
    <alternativeName>
        <fullName evidence="2">50S ribosomal protein L21</fullName>
    </alternativeName>
</protein>
<gene>
    <name evidence="1" type="primary">rplU</name>
    <name type="ordered locus">Erum4830</name>
    <name type="ordered locus">ERWE_CDS_05050</name>
</gene>
<organism>
    <name type="scientific">Ehrlichia ruminantium (strain Welgevonden)</name>
    <dbReference type="NCBI Taxonomy" id="254945"/>
    <lineage>
        <taxon>Bacteria</taxon>
        <taxon>Pseudomonadati</taxon>
        <taxon>Pseudomonadota</taxon>
        <taxon>Alphaproteobacteria</taxon>
        <taxon>Rickettsiales</taxon>
        <taxon>Anaplasmataceae</taxon>
        <taxon>Ehrlichia</taxon>
    </lineage>
</organism>
<sequence length="102" mass="11809">MFAIIETGGKQYKVKEHDIIRIEKLNASVGEEVTLSKVIALTGVNNEVIFTQNASVTASVLEQCRNDKVIIFKKKRRKNYRRKNGHRQYMTVLRITKINNME</sequence>
<proteinExistence type="inferred from homology"/>